<dbReference type="EMBL" id="AL928667">
    <property type="protein sequence ID" value="CAM14888.1"/>
    <property type="status" value="ALT_SEQ"/>
    <property type="molecule type" value="Genomic_DNA"/>
</dbReference>
<dbReference type="EMBL" id="AL928667">
    <property type="protein sequence ID" value="CAM14889.1"/>
    <property type="molecule type" value="Genomic_DNA"/>
</dbReference>
<dbReference type="EMBL" id="AL928667">
    <property type="protein sequence ID" value="CAM14890.1"/>
    <property type="molecule type" value="Genomic_DNA"/>
</dbReference>
<dbReference type="EMBL" id="BC150703">
    <property type="protein sequence ID" value="AAI50704.1"/>
    <property type="molecule type" value="mRNA"/>
</dbReference>
<dbReference type="CCDS" id="CCDS89874.1">
    <molecule id="A2ASQ1-1"/>
</dbReference>
<dbReference type="RefSeq" id="NP_001355955.1">
    <molecule id="A2ASQ1-1"/>
    <property type="nucleotide sequence ID" value="NM_001369026.2"/>
</dbReference>
<dbReference type="RefSeq" id="XP_011248479.1">
    <property type="nucleotide sequence ID" value="XM_011250177.2"/>
</dbReference>
<dbReference type="PDB" id="3PVE">
    <property type="method" value="X-ray"/>
    <property type="resolution" value="1.40 A"/>
    <property type="chains" value="A/B=1510-1701"/>
</dbReference>
<dbReference type="PDBsum" id="3PVE"/>
<dbReference type="SMR" id="A2ASQ1"/>
<dbReference type="FunCoup" id="A2ASQ1">
    <property type="interactions" value="181"/>
</dbReference>
<dbReference type="IntAct" id="A2ASQ1">
    <property type="interactions" value="2"/>
</dbReference>
<dbReference type="STRING" id="10090.ENSMUSP00000137931"/>
<dbReference type="GlyCosmos" id="A2ASQ1">
    <property type="glycosylation" value="5 sites, No reported glycans"/>
</dbReference>
<dbReference type="GlyGen" id="A2ASQ1">
    <property type="glycosylation" value="8 sites, 1 O-linked glycan (1 site)"/>
</dbReference>
<dbReference type="iPTMnet" id="A2ASQ1"/>
<dbReference type="PhosphoSitePlus" id="A2ASQ1"/>
<dbReference type="SwissPalm" id="A2ASQ1"/>
<dbReference type="PaxDb" id="10090-ENSMUSP00000137931"/>
<dbReference type="PeptideAtlas" id="A2ASQ1"/>
<dbReference type="ProteomicsDB" id="296138">
    <molecule id="A2ASQ1-1"/>
</dbReference>
<dbReference type="ProteomicsDB" id="296139">
    <molecule id="A2ASQ1-2"/>
</dbReference>
<dbReference type="ProteomicsDB" id="296140">
    <molecule id="A2ASQ1-3"/>
</dbReference>
<dbReference type="Pumba" id="A2ASQ1"/>
<dbReference type="Antibodypedia" id="12009">
    <property type="antibodies" value="206 antibodies from 27 providers"/>
</dbReference>
<dbReference type="Ensembl" id="ENSMUST00000105575.9">
    <molecule id="A2ASQ1-1"/>
    <property type="protein sequence ID" value="ENSMUSP00000101200.3"/>
    <property type="gene ID" value="ENSMUSG00000041936.19"/>
</dbReference>
<dbReference type="GeneID" id="11603"/>
<dbReference type="UCSC" id="uc008wgg.1">
    <molecule id="A2ASQ1-1"/>
    <property type="organism name" value="mouse"/>
</dbReference>
<dbReference type="AGR" id="MGI:87961"/>
<dbReference type="MGI" id="MGI:87961">
    <property type="gene designation" value="Agrn"/>
</dbReference>
<dbReference type="VEuPathDB" id="HostDB:ENSMUSG00000041936"/>
<dbReference type="eggNOG" id="KOG3509">
    <property type="taxonomic scope" value="Eukaryota"/>
</dbReference>
<dbReference type="GeneTree" id="ENSGT00940000158337"/>
<dbReference type="InParanoid" id="A2ASQ1"/>
<dbReference type="PhylomeDB" id="A2ASQ1"/>
<dbReference type="TreeFam" id="TF326548"/>
<dbReference type="Reactome" id="R-MMU-1971475">
    <property type="pathway name" value="A tetrasaccharide linker sequence is required for GAG synthesis"/>
</dbReference>
<dbReference type="Reactome" id="R-MMU-2022928">
    <property type="pathway name" value="HS-GAG biosynthesis"/>
</dbReference>
<dbReference type="Reactome" id="R-MMU-2024096">
    <property type="pathway name" value="HS-GAG degradation"/>
</dbReference>
<dbReference type="Reactome" id="R-MMU-3000178">
    <property type="pathway name" value="ECM proteoglycans"/>
</dbReference>
<dbReference type="Reactome" id="R-MMU-975634">
    <property type="pathway name" value="Retinoid metabolism and transport"/>
</dbReference>
<dbReference type="Reactome" id="R-MMU-9913351">
    <property type="pathway name" value="Formation of the dystrophin-glycoprotein complex (DGC)"/>
</dbReference>
<dbReference type="BioGRID-ORCS" id="11603">
    <property type="hits" value="3 hits in 78 CRISPR screens"/>
</dbReference>
<dbReference type="ChiTaRS" id="Agrn">
    <property type="organism name" value="mouse"/>
</dbReference>
<dbReference type="EvolutionaryTrace" id="A2ASQ1"/>
<dbReference type="PRO" id="PR:A2ASQ1"/>
<dbReference type="Proteomes" id="UP000000589">
    <property type="component" value="Chromosome 4"/>
</dbReference>
<dbReference type="RNAct" id="A2ASQ1">
    <property type="molecule type" value="protein"/>
</dbReference>
<dbReference type="Bgee" id="ENSMUSG00000041936">
    <property type="expression patterns" value="Expressed in metanephric proximal tubule and 264 other cell types or tissues"/>
</dbReference>
<dbReference type="ExpressionAtlas" id="A2ASQ1">
    <property type="expression patterns" value="baseline and differential"/>
</dbReference>
<dbReference type="GO" id="GO:0005604">
    <property type="term" value="C:basement membrane"/>
    <property type="evidence" value="ECO:0000314"/>
    <property type="project" value="MGI"/>
</dbReference>
<dbReference type="GO" id="GO:0009986">
    <property type="term" value="C:cell surface"/>
    <property type="evidence" value="ECO:0000314"/>
    <property type="project" value="BHF-UCL"/>
</dbReference>
<dbReference type="GO" id="GO:0062023">
    <property type="term" value="C:collagen-containing extracellular matrix"/>
    <property type="evidence" value="ECO:0007005"/>
    <property type="project" value="BHF-UCL"/>
</dbReference>
<dbReference type="GO" id="GO:0005576">
    <property type="term" value="C:extracellular region"/>
    <property type="evidence" value="ECO:0000304"/>
    <property type="project" value="Reactome"/>
</dbReference>
<dbReference type="GO" id="GO:0005615">
    <property type="term" value="C:extracellular space"/>
    <property type="evidence" value="ECO:0000314"/>
    <property type="project" value="MGI"/>
</dbReference>
<dbReference type="GO" id="GO:0005796">
    <property type="term" value="C:Golgi lumen"/>
    <property type="evidence" value="ECO:0000304"/>
    <property type="project" value="Reactome"/>
</dbReference>
<dbReference type="GO" id="GO:0042383">
    <property type="term" value="C:sarcolemma"/>
    <property type="evidence" value="ECO:0000314"/>
    <property type="project" value="BHF-UCL"/>
</dbReference>
<dbReference type="GO" id="GO:0045202">
    <property type="term" value="C:synapse"/>
    <property type="evidence" value="ECO:0000314"/>
    <property type="project" value="MGI"/>
</dbReference>
<dbReference type="GO" id="GO:0030548">
    <property type="term" value="F:acetylcholine receptor regulator activity"/>
    <property type="evidence" value="ECO:0000314"/>
    <property type="project" value="MGI"/>
</dbReference>
<dbReference type="GO" id="GO:0042030">
    <property type="term" value="F:ATPase inhibitor activity"/>
    <property type="evidence" value="ECO:0000314"/>
    <property type="project" value="BHF-UCL"/>
</dbReference>
<dbReference type="GO" id="GO:0005509">
    <property type="term" value="F:calcium ion binding"/>
    <property type="evidence" value="ECO:0000250"/>
    <property type="project" value="UniProtKB"/>
</dbReference>
<dbReference type="GO" id="GO:0035374">
    <property type="term" value="F:chondroitin sulfate binding"/>
    <property type="evidence" value="ECO:0000314"/>
    <property type="project" value="UniProtKB"/>
</dbReference>
<dbReference type="GO" id="GO:0002162">
    <property type="term" value="F:dystroglycan binding"/>
    <property type="evidence" value="ECO:0000250"/>
    <property type="project" value="UniProtKB"/>
</dbReference>
<dbReference type="GO" id="GO:0043395">
    <property type="term" value="F:heparan sulfate proteoglycan binding"/>
    <property type="evidence" value="ECO:0000314"/>
    <property type="project" value="UniProtKB"/>
</dbReference>
<dbReference type="GO" id="GO:0048018">
    <property type="term" value="F:receptor ligand activity"/>
    <property type="evidence" value="ECO:0000314"/>
    <property type="project" value="MGI"/>
</dbReference>
<dbReference type="GO" id="GO:0033691">
    <property type="term" value="F:sialic acid binding"/>
    <property type="evidence" value="ECO:0000250"/>
    <property type="project" value="UniProtKB"/>
</dbReference>
<dbReference type="GO" id="GO:0044325">
    <property type="term" value="F:transmembrane transporter binding"/>
    <property type="evidence" value="ECO:0000353"/>
    <property type="project" value="BHF-UCL"/>
</dbReference>
<dbReference type="GO" id="GO:0141110">
    <property type="term" value="F:transporter inhibitor activity"/>
    <property type="evidence" value="ECO:0000314"/>
    <property type="project" value="BHF-UCL"/>
</dbReference>
<dbReference type="GO" id="GO:0030154">
    <property type="term" value="P:cell differentiation"/>
    <property type="evidence" value="ECO:0007669"/>
    <property type="project" value="UniProtKB-KW"/>
</dbReference>
<dbReference type="GO" id="GO:0007268">
    <property type="term" value="P:chemical synaptic transmission"/>
    <property type="evidence" value="ECO:0000314"/>
    <property type="project" value="MGI"/>
</dbReference>
<dbReference type="GO" id="GO:0007623">
    <property type="term" value="P:circadian rhythm"/>
    <property type="evidence" value="ECO:0000316"/>
    <property type="project" value="MGI"/>
</dbReference>
<dbReference type="GO" id="GO:0007167">
    <property type="term" value="P:enzyme-linked receptor protein signaling pathway"/>
    <property type="evidence" value="ECO:0000314"/>
    <property type="project" value="MGI"/>
</dbReference>
<dbReference type="GO" id="GO:0097049">
    <property type="term" value="P:motor neuron apoptotic process"/>
    <property type="evidence" value="ECO:0000315"/>
    <property type="project" value="MGI"/>
</dbReference>
<dbReference type="GO" id="GO:1903277">
    <property type="term" value="P:negative regulation of sodium ion export across plasma membrane"/>
    <property type="evidence" value="ECO:0000314"/>
    <property type="project" value="BHF-UCL"/>
</dbReference>
<dbReference type="GO" id="GO:0007528">
    <property type="term" value="P:neuromuscular junction development"/>
    <property type="evidence" value="ECO:0000316"/>
    <property type="project" value="MGI"/>
</dbReference>
<dbReference type="GO" id="GO:0007009">
    <property type="term" value="P:plasma membrane organization"/>
    <property type="evidence" value="ECO:0000315"/>
    <property type="project" value="MGI"/>
</dbReference>
<dbReference type="GO" id="GO:0051491">
    <property type="term" value="P:positive regulation of filopodium assembly"/>
    <property type="evidence" value="ECO:0000250"/>
    <property type="project" value="UniProtKB"/>
</dbReference>
<dbReference type="GO" id="GO:0043547">
    <property type="term" value="P:positive regulation of GTPase activity"/>
    <property type="evidence" value="ECO:0000250"/>
    <property type="project" value="UniProtKB"/>
</dbReference>
<dbReference type="GO" id="GO:2000673">
    <property type="term" value="P:positive regulation of motor neuron apoptotic process"/>
    <property type="evidence" value="ECO:0000315"/>
    <property type="project" value="MGI"/>
</dbReference>
<dbReference type="GO" id="GO:0032092">
    <property type="term" value="P:positive regulation of protein binding"/>
    <property type="evidence" value="ECO:0000314"/>
    <property type="project" value="UniProtKB"/>
</dbReference>
<dbReference type="GO" id="GO:2000541">
    <property type="term" value="P:positive regulation of protein geranylgeranylation"/>
    <property type="evidence" value="ECO:0000315"/>
    <property type="project" value="UniProtKB"/>
</dbReference>
<dbReference type="GO" id="GO:0001934">
    <property type="term" value="P:positive regulation of protein phosphorylation"/>
    <property type="evidence" value="ECO:0000314"/>
    <property type="project" value="UniProtKB"/>
</dbReference>
<dbReference type="GO" id="GO:0035022">
    <property type="term" value="P:positive regulation of Rac protein signal transduction"/>
    <property type="evidence" value="ECO:0000314"/>
    <property type="project" value="MGI"/>
</dbReference>
<dbReference type="GO" id="GO:1904395">
    <property type="term" value="P:positive regulation of skeletal muscle acetylcholine-gated channel clustering"/>
    <property type="evidence" value="ECO:0000314"/>
    <property type="project" value="MGI"/>
</dbReference>
<dbReference type="GO" id="GO:0045887">
    <property type="term" value="P:positive regulation of synaptic assembly at neuromuscular junction"/>
    <property type="evidence" value="ECO:0000315"/>
    <property type="project" value="UniProtKB"/>
</dbReference>
<dbReference type="GO" id="GO:0045944">
    <property type="term" value="P:positive regulation of transcription by RNA polymerase II"/>
    <property type="evidence" value="ECO:0000314"/>
    <property type="project" value="MGI"/>
</dbReference>
<dbReference type="GO" id="GO:0015031">
    <property type="term" value="P:protein transport"/>
    <property type="evidence" value="ECO:0000314"/>
    <property type="project" value="MGI"/>
</dbReference>
<dbReference type="GO" id="GO:0043113">
    <property type="term" value="P:receptor clustering"/>
    <property type="evidence" value="ECO:0000314"/>
    <property type="project" value="MGI"/>
</dbReference>
<dbReference type="GO" id="GO:0086036">
    <property type="term" value="P:regulation of cardiac muscle cell membrane potential"/>
    <property type="evidence" value="ECO:0000314"/>
    <property type="project" value="BHF-UCL"/>
</dbReference>
<dbReference type="GO" id="GO:0055117">
    <property type="term" value="P:regulation of cardiac muscle contraction"/>
    <property type="evidence" value="ECO:0000314"/>
    <property type="project" value="BHF-UCL"/>
</dbReference>
<dbReference type="GO" id="GO:0043087">
    <property type="term" value="P:regulation of GTPase activity"/>
    <property type="evidence" value="ECO:0000314"/>
    <property type="project" value="UniProtKB"/>
</dbReference>
<dbReference type="GO" id="GO:0060025">
    <property type="term" value="P:regulation of synaptic activity"/>
    <property type="evidence" value="ECO:0000314"/>
    <property type="project" value="MGI"/>
</dbReference>
<dbReference type="CDD" id="cd00054">
    <property type="entry name" value="EGF_CA"/>
    <property type="match status" value="1"/>
</dbReference>
<dbReference type="CDD" id="cd00055">
    <property type="entry name" value="EGF_Lam"/>
    <property type="match status" value="2"/>
</dbReference>
<dbReference type="CDD" id="cd00104">
    <property type="entry name" value="KAZAL_FS"/>
    <property type="match status" value="9"/>
</dbReference>
<dbReference type="CDD" id="cd00110">
    <property type="entry name" value="LamG"/>
    <property type="match status" value="3"/>
</dbReference>
<dbReference type="FunFam" id="3.30.60.30:FF:000013">
    <property type="entry name" value="Agrin"/>
    <property type="match status" value="1"/>
</dbReference>
<dbReference type="FunFam" id="3.30.60.30:FF:000016">
    <property type="entry name" value="Agrin"/>
    <property type="match status" value="1"/>
</dbReference>
<dbReference type="FunFam" id="3.30.60.30:FF:000075">
    <property type="entry name" value="Agrin"/>
    <property type="match status" value="1"/>
</dbReference>
<dbReference type="FunFam" id="3.30.60.30:FF:000039">
    <property type="entry name" value="Agrin isoform B"/>
    <property type="match status" value="1"/>
</dbReference>
<dbReference type="FunFam" id="2.10.25.10:FF:000228">
    <property type="entry name" value="agrin isoform X1"/>
    <property type="match status" value="1"/>
</dbReference>
<dbReference type="FunFam" id="3.30.60.30:FF:000041">
    <property type="entry name" value="agrin isoform X5"/>
    <property type="match status" value="1"/>
</dbReference>
<dbReference type="FunFam" id="2.10.25.10:FF:000095">
    <property type="entry name" value="Notch, isoform B"/>
    <property type="match status" value="1"/>
</dbReference>
<dbReference type="FunFam" id="2.60.120.200:FF:000031">
    <property type="entry name" value="NtA agrin"/>
    <property type="match status" value="1"/>
</dbReference>
<dbReference type="FunFam" id="3.30.60.30:FF:000019">
    <property type="entry name" value="NtA agrin"/>
    <property type="match status" value="1"/>
</dbReference>
<dbReference type="FunFam" id="3.30.70.960:FF:000001">
    <property type="entry name" value="NtA agrin"/>
    <property type="match status" value="1"/>
</dbReference>
<dbReference type="FunFam" id="2.10.25.10:FF:000134">
    <property type="entry name" value="Transmembrane agrin"/>
    <property type="match status" value="1"/>
</dbReference>
<dbReference type="FunFam" id="2.10.25.10:FF:000140">
    <property type="entry name" value="Transmembrane agrin"/>
    <property type="match status" value="1"/>
</dbReference>
<dbReference type="FunFam" id="2.60.120.200:FF:000027">
    <property type="entry name" value="Transmembrane agrin"/>
    <property type="match status" value="1"/>
</dbReference>
<dbReference type="FunFam" id="2.60.120.200:FF:000045">
    <property type="entry name" value="Transmembrane agrin"/>
    <property type="match status" value="1"/>
</dbReference>
<dbReference type="FunFam" id="3.30.60.30:FF:000008">
    <property type="entry name" value="Transmembrane agrin"/>
    <property type="match status" value="1"/>
</dbReference>
<dbReference type="FunFam" id="3.30.60.30:FF:000015">
    <property type="entry name" value="Transmembrane agrin"/>
    <property type="match status" value="1"/>
</dbReference>
<dbReference type="FunFam" id="3.30.60.30:FF:000022">
    <property type="entry name" value="Transmembrane agrin"/>
    <property type="match status" value="1"/>
</dbReference>
<dbReference type="Gene3D" id="2.60.120.200">
    <property type="match status" value="3"/>
</dbReference>
<dbReference type="Gene3D" id="3.30.60.30">
    <property type="match status" value="9"/>
</dbReference>
<dbReference type="Gene3D" id="2.10.25.10">
    <property type="entry name" value="Laminin"/>
    <property type="match status" value="6"/>
</dbReference>
<dbReference type="Gene3D" id="3.30.70.960">
    <property type="entry name" value="SEA domain"/>
    <property type="match status" value="1"/>
</dbReference>
<dbReference type="InterPro" id="IPR013320">
    <property type="entry name" value="ConA-like_dom_sf"/>
</dbReference>
<dbReference type="InterPro" id="IPR001881">
    <property type="entry name" value="EGF-like_Ca-bd_dom"/>
</dbReference>
<dbReference type="InterPro" id="IPR000742">
    <property type="entry name" value="EGF-like_dom"/>
</dbReference>
<dbReference type="InterPro" id="IPR003884">
    <property type="entry name" value="FacI_MAC"/>
</dbReference>
<dbReference type="InterPro" id="IPR003645">
    <property type="entry name" value="Fol_N"/>
</dbReference>
<dbReference type="InterPro" id="IPR002350">
    <property type="entry name" value="Kazal_dom"/>
</dbReference>
<dbReference type="InterPro" id="IPR036058">
    <property type="entry name" value="Kazal_dom_sf"/>
</dbReference>
<dbReference type="InterPro" id="IPR001791">
    <property type="entry name" value="Laminin_G"/>
</dbReference>
<dbReference type="InterPro" id="IPR002049">
    <property type="entry name" value="LE_dom"/>
</dbReference>
<dbReference type="InterPro" id="IPR050372">
    <property type="entry name" value="Neurexin-related_CASP"/>
</dbReference>
<dbReference type="InterPro" id="IPR000082">
    <property type="entry name" value="SEA_dom"/>
</dbReference>
<dbReference type="InterPro" id="IPR036364">
    <property type="entry name" value="SEA_dom_sf"/>
</dbReference>
<dbReference type="PANTHER" id="PTHR15036:SF83">
    <property type="entry name" value="AGRIN"/>
    <property type="match status" value="1"/>
</dbReference>
<dbReference type="PANTHER" id="PTHR15036">
    <property type="entry name" value="PIKACHURIN-LIKE PROTEIN"/>
    <property type="match status" value="1"/>
</dbReference>
<dbReference type="Pfam" id="PF00008">
    <property type="entry name" value="EGF"/>
    <property type="match status" value="3"/>
</dbReference>
<dbReference type="Pfam" id="PF00053">
    <property type="entry name" value="EGF_laminin"/>
    <property type="match status" value="2"/>
</dbReference>
<dbReference type="Pfam" id="PF00050">
    <property type="entry name" value="Kazal_1"/>
    <property type="match status" value="1"/>
</dbReference>
<dbReference type="Pfam" id="PF07648">
    <property type="entry name" value="Kazal_2"/>
    <property type="match status" value="8"/>
</dbReference>
<dbReference type="Pfam" id="PF00054">
    <property type="entry name" value="Laminin_G_1"/>
    <property type="match status" value="3"/>
</dbReference>
<dbReference type="Pfam" id="PF01390">
    <property type="entry name" value="SEA"/>
    <property type="match status" value="1"/>
</dbReference>
<dbReference type="PRINTS" id="PR00011">
    <property type="entry name" value="EGFLAMININ"/>
</dbReference>
<dbReference type="SMART" id="SM00181">
    <property type="entry name" value="EGF"/>
    <property type="match status" value="6"/>
</dbReference>
<dbReference type="SMART" id="SM00179">
    <property type="entry name" value="EGF_CA"/>
    <property type="match status" value="3"/>
</dbReference>
<dbReference type="SMART" id="SM00180">
    <property type="entry name" value="EGF_Lam"/>
    <property type="match status" value="2"/>
</dbReference>
<dbReference type="SMART" id="SM00057">
    <property type="entry name" value="FIMAC"/>
    <property type="match status" value="3"/>
</dbReference>
<dbReference type="SMART" id="SM00274">
    <property type="entry name" value="FOLN"/>
    <property type="match status" value="5"/>
</dbReference>
<dbReference type="SMART" id="SM00280">
    <property type="entry name" value="KAZAL"/>
    <property type="match status" value="9"/>
</dbReference>
<dbReference type="SMART" id="SM00282">
    <property type="entry name" value="LamG"/>
    <property type="match status" value="3"/>
</dbReference>
<dbReference type="SMART" id="SM00200">
    <property type="entry name" value="SEA"/>
    <property type="match status" value="1"/>
</dbReference>
<dbReference type="SUPFAM" id="SSF49899">
    <property type="entry name" value="Concanavalin A-like lectins/glucanases"/>
    <property type="match status" value="3"/>
</dbReference>
<dbReference type="SUPFAM" id="SSF57196">
    <property type="entry name" value="EGF/Laminin"/>
    <property type="match status" value="3"/>
</dbReference>
<dbReference type="SUPFAM" id="SSF100895">
    <property type="entry name" value="Kazal-type serine protease inhibitors"/>
    <property type="match status" value="9"/>
</dbReference>
<dbReference type="SUPFAM" id="SSF82671">
    <property type="entry name" value="SEA domain"/>
    <property type="match status" value="1"/>
</dbReference>
<dbReference type="PROSITE" id="PS00022">
    <property type="entry name" value="EGF_1"/>
    <property type="match status" value="6"/>
</dbReference>
<dbReference type="PROSITE" id="PS01186">
    <property type="entry name" value="EGF_2"/>
    <property type="match status" value="1"/>
</dbReference>
<dbReference type="PROSITE" id="PS50026">
    <property type="entry name" value="EGF_3"/>
    <property type="match status" value="4"/>
</dbReference>
<dbReference type="PROSITE" id="PS01248">
    <property type="entry name" value="EGF_LAM_1"/>
    <property type="match status" value="1"/>
</dbReference>
<dbReference type="PROSITE" id="PS50027">
    <property type="entry name" value="EGF_LAM_2"/>
    <property type="match status" value="2"/>
</dbReference>
<dbReference type="PROSITE" id="PS51465">
    <property type="entry name" value="KAZAL_2"/>
    <property type="match status" value="9"/>
</dbReference>
<dbReference type="PROSITE" id="PS50025">
    <property type="entry name" value="LAM_G_DOMAIN"/>
    <property type="match status" value="3"/>
</dbReference>
<dbReference type="PROSITE" id="PS50024">
    <property type="entry name" value="SEA"/>
    <property type="match status" value="1"/>
</dbReference>
<organism>
    <name type="scientific">Mus musculus</name>
    <name type="common">Mouse</name>
    <dbReference type="NCBI Taxonomy" id="10090"/>
    <lineage>
        <taxon>Eukaryota</taxon>
        <taxon>Metazoa</taxon>
        <taxon>Chordata</taxon>
        <taxon>Craniata</taxon>
        <taxon>Vertebrata</taxon>
        <taxon>Euteleostomi</taxon>
        <taxon>Mammalia</taxon>
        <taxon>Eutheria</taxon>
        <taxon>Euarchontoglires</taxon>
        <taxon>Glires</taxon>
        <taxon>Rodentia</taxon>
        <taxon>Myomorpha</taxon>
        <taxon>Muroidea</taxon>
        <taxon>Muridae</taxon>
        <taxon>Murinae</taxon>
        <taxon>Mus</taxon>
        <taxon>Mus</taxon>
    </lineage>
</organism>
<feature type="chain" id="PRO_0000356178" description="Agrin">
    <location>
        <begin position="1"/>
        <end position="1950"/>
    </location>
</feature>
<feature type="chain" id="PRO_0000421617" description="Agrin N-terminal 110 kDa subunit">
    <location>
        <begin position="48"/>
        <end position="986"/>
    </location>
</feature>
<feature type="chain" id="PRO_0000421618" description="Agrin C-terminal 110 kDa subunit">
    <location>
        <begin position="987"/>
        <end position="1950"/>
    </location>
</feature>
<feature type="chain" id="PRO_0000421619" description="Agrin C-terminal 90 kDa fragment">
    <location>
        <begin position="987"/>
        <end position="1745"/>
    </location>
</feature>
<feature type="chain" id="PRO_0000421620" description="Agrin C-terminal 22 kDa fragment">
    <location>
        <begin position="1746"/>
        <end position="1950"/>
    </location>
</feature>
<feature type="topological domain" description="Cytoplasmic" evidence="3">
    <location>
        <begin position="1"/>
        <end position="26"/>
    </location>
</feature>
<feature type="transmembrane region" description="Helical; Signal-anchor for type II membrane protein" evidence="3">
    <location>
        <begin position="27"/>
        <end position="47"/>
    </location>
</feature>
<feature type="topological domain" description="Extracellular" evidence="3">
    <location>
        <begin position="48"/>
        <end position="1950"/>
    </location>
</feature>
<feature type="domain" description="Kazal-like 1" evidence="8">
    <location>
        <begin position="86"/>
        <end position="139"/>
    </location>
</feature>
<feature type="domain" description="Kazal-like 2" evidence="8">
    <location>
        <begin position="159"/>
        <end position="214"/>
    </location>
</feature>
<feature type="domain" description="Kazal-like 3" evidence="8">
    <location>
        <begin position="232"/>
        <end position="286"/>
    </location>
</feature>
<feature type="domain" description="Kazal-like 4" evidence="8">
    <location>
        <begin position="303"/>
        <end position="358"/>
    </location>
</feature>
<feature type="domain" description="Kazal-like 5" evidence="8">
    <location>
        <begin position="379"/>
        <end position="431"/>
    </location>
</feature>
<feature type="domain" description="Kazal-like 6" evidence="8">
    <location>
        <begin position="442"/>
        <end position="496"/>
    </location>
</feature>
<feature type="domain" description="Kazal-like 7" evidence="8">
    <location>
        <begin position="502"/>
        <end position="561"/>
    </location>
</feature>
<feature type="domain" description="Kazal-like 8" evidence="8">
    <location>
        <begin position="594"/>
        <end position="647"/>
    </location>
</feature>
<feature type="domain" description="Laminin EGF-like 1" evidence="7">
    <location>
        <begin position="688"/>
        <end position="741"/>
    </location>
</feature>
<feature type="domain" description="Laminin EGF-like 2" evidence="7">
    <location>
        <begin position="742"/>
        <end position="788"/>
    </location>
</feature>
<feature type="domain" description="Kazal-like 9" evidence="8">
    <location>
        <begin position="812"/>
        <end position="866"/>
    </location>
</feature>
<feature type="domain" description="SEA" evidence="6">
    <location>
        <begin position="1014"/>
        <end position="1136"/>
    </location>
</feature>
<feature type="domain" description="EGF-like 1" evidence="4">
    <location>
        <begin position="1211"/>
        <end position="1249"/>
    </location>
</feature>
<feature type="domain" description="Laminin G-like 1" evidence="5">
    <location>
        <begin position="1254"/>
        <end position="1430"/>
    </location>
</feature>
<feature type="domain" description="EGF-like 2" evidence="4">
    <location>
        <begin position="1431"/>
        <end position="1468"/>
    </location>
</feature>
<feature type="domain" description="EGF-like 3" evidence="4">
    <location>
        <begin position="1470"/>
        <end position="1507"/>
    </location>
</feature>
<feature type="domain" description="Laminin G-like 2" evidence="5">
    <location>
        <begin position="1517"/>
        <end position="1699"/>
    </location>
</feature>
<feature type="domain" description="EGF-like 4" evidence="4">
    <location>
        <begin position="1700"/>
        <end position="1739"/>
    </location>
</feature>
<feature type="domain" description="Laminin G-like 3" evidence="5">
    <location>
        <begin position="1775"/>
        <end position="1947"/>
    </location>
</feature>
<feature type="region of interest" description="Disordered" evidence="9">
    <location>
        <begin position="892"/>
        <end position="971"/>
    </location>
</feature>
<feature type="region of interest" description="Disordered" evidence="9">
    <location>
        <begin position="1174"/>
        <end position="1217"/>
    </location>
</feature>
<feature type="compositionally biased region" description="Low complexity" evidence="9">
    <location>
        <begin position="892"/>
        <end position="906"/>
    </location>
</feature>
<feature type="compositionally biased region" description="Polar residues" evidence="9">
    <location>
        <begin position="915"/>
        <end position="929"/>
    </location>
</feature>
<feature type="compositionally biased region" description="Acidic residues" evidence="9">
    <location>
        <begin position="951"/>
        <end position="961"/>
    </location>
</feature>
<feature type="compositionally biased region" description="Low complexity" evidence="9">
    <location>
        <begin position="1183"/>
        <end position="1198"/>
    </location>
</feature>
<feature type="binding site" evidence="2">
    <location>
        <position position="1822"/>
    </location>
    <ligand>
        <name>Ca(2+)</name>
        <dbReference type="ChEBI" id="CHEBI:29108"/>
    </ligand>
</feature>
<feature type="binding site" evidence="2">
    <location>
        <position position="1839"/>
    </location>
    <ligand>
        <name>Ca(2+)</name>
        <dbReference type="ChEBI" id="CHEBI:29108"/>
    </ligand>
</feature>
<feature type="binding site" evidence="2">
    <location>
        <position position="1889"/>
    </location>
    <ligand>
        <name>Ca(2+)</name>
        <dbReference type="ChEBI" id="CHEBI:29108"/>
    </ligand>
</feature>
<feature type="binding site" evidence="2">
    <location>
        <position position="1891"/>
    </location>
    <ligand>
        <name>Ca(2+)</name>
        <dbReference type="ChEBI" id="CHEBI:29108"/>
    </ligand>
</feature>
<feature type="site" description="Cleavage, alpha site; by neurotrypsin" evidence="1">
    <location>
        <begin position="986"/>
        <end position="987"/>
    </location>
</feature>
<feature type="site" description="Alternative splice site to produce 'x' isoforms">
    <location>
        <position position="1134"/>
    </location>
</feature>
<feature type="site" description="Alternative splice site to produce 'y' isoforms">
    <location>
        <position position="1633"/>
    </location>
</feature>
<feature type="site" description="Critical for cleavage by neurotrypsin" evidence="1">
    <location>
        <position position="1744"/>
    </location>
</feature>
<feature type="site" description="Cleavage, beta site; by neurotrypsin" evidence="1">
    <location>
        <begin position="1745"/>
        <end position="1746"/>
    </location>
</feature>
<feature type="site" description="Alternative splice site to produce 'z' isoforms">
    <location>
        <position position="1770"/>
    </location>
</feature>
<feature type="site" description="Highly important for the agrin receptor complex activity of the 'z' insert" evidence="1">
    <location>
        <position position="1774"/>
    </location>
</feature>
<feature type="modified residue" description="Phosphoserine" evidence="23">
    <location>
        <position position="569"/>
    </location>
</feature>
<feature type="modified residue" description="Phosphoserine" evidence="23">
    <location>
        <position position="571"/>
    </location>
</feature>
<feature type="glycosylation site" description="N-linked (GlcNAc...) asparagine" evidence="3">
    <location>
        <position position="145"/>
    </location>
</feature>
<feature type="glycosylation site" description="N-linked (GlcNAc...) asparagine" evidence="3">
    <location>
        <position position="672"/>
    </location>
</feature>
<feature type="glycosylation site" description="N-linked (GlcNAc...) asparagine" evidence="3">
    <location>
        <position position="827"/>
    </location>
</feature>
<feature type="glycosylation site" description="N-linked (GlcNAc...) asparagine" evidence="3">
    <location>
        <position position="948"/>
    </location>
</feature>
<feature type="glycosylation site" description="O-linked (Fuc...) serine" evidence="2">
    <location>
        <position position="1717"/>
    </location>
</feature>
<feature type="disulfide bond" evidence="8">
    <location>
        <begin position="92"/>
        <end position="123"/>
    </location>
</feature>
<feature type="disulfide bond" evidence="8">
    <location>
        <begin position="97"/>
        <end position="116"/>
    </location>
</feature>
<feature type="disulfide bond" evidence="8">
    <location>
        <begin position="105"/>
        <end position="137"/>
    </location>
</feature>
<feature type="disulfide bond" evidence="8">
    <location>
        <begin position="165"/>
        <end position="198"/>
    </location>
</feature>
<feature type="disulfide bond" evidence="8">
    <location>
        <begin position="171"/>
        <end position="191"/>
    </location>
</feature>
<feature type="disulfide bond" evidence="8">
    <location>
        <begin position="180"/>
        <end position="212"/>
    </location>
</feature>
<feature type="disulfide bond" evidence="8">
    <location>
        <begin position="244"/>
        <end position="263"/>
    </location>
</feature>
<feature type="disulfide bond" evidence="8">
    <location>
        <begin position="252"/>
        <end position="284"/>
    </location>
</feature>
<feature type="disulfide bond" evidence="8">
    <location>
        <begin position="309"/>
        <end position="342"/>
    </location>
</feature>
<feature type="disulfide bond" evidence="8">
    <location>
        <begin position="316"/>
        <end position="335"/>
    </location>
</feature>
<feature type="disulfide bond" evidence="8">
    <location>
        <begin position="324"/>
        <end position="356"/>
    </location>
</feature>
<feature type="disulfide bond" evidence="8">
    <location>
        <begin position="385"/>
        <end position="415"/>
    </location>
</feature>
<feature type="disulfide bond" evidence="8">
    <location>
        <begin position="389"/>
        <end position="408"/>
    </location>
</feature>
<feature type="disulfide bond" evidence="8">
    <location>
        <begin position="397"/>
        <end position="429"/>
    </location>
</feature>
<feature type="disulfide bond" evidence="8">
    <location>
        <begin position="448"/>
        <end position="480"/>
    </location>
</feature>
<feature type="disulfide bond" evidence="8">
    <location>
        <begin position="454"/>
        <end position="473"/>
    </location>
</feature>
<feature type="disulfide bond" evidence="8">
    <location>
        <begin position="462"/>
        <end position="494"/>
    </location>
</feature>
<feature type="disulfide bond" evidence="8">
    <location>
        <begin position="508"/>
        <end position="545"/>
    </location>
</feature>
<feature type="disulfide bond" evidence="8">
    <location>
        <begin position="518"/>
        <end position="538"/>
    </location>
</feature>
<feature type="disulfide bond" evidence="8">
    <location>
        <begin position="527"/>
        <end position="559"/>
    </location>
</feature>
<feature type="disulfide bond" evidence="8">
    <location>
        <begin position="600"/>
        <end position="631"/>
    </location>
</feature>
<feature type="disulfide bond" evidence="8">
    <location>
        <begin position="604"/>
        <end position="624"/>
    </location>
</feature>
<feature type="disulfide bond" evidence="8">
    <location>
        <begin position="613"/>
        <end position="645"/>
    </location>
</feature>
<feature type="disulfide bond" evidence="1">
    <location>
        <begin position="688"/>
        <end position="700"/>
    </location>
</feature>
<feature type="disulfide bond" evidence="1">
    <location>
        <begin position="690"/>
        <end position="707"/>
    </location>
</feature>
<feature type="disulfide bond" evidence="1">
    <location>
        <begin position="709"/>
        <end position="718"/>
    </location>
</feature>
<feature type="disulfide bond" evidence="1">
    <location>
        <begin position="721"/>
        <end position="739"/>
    </location>
</feature>
<feature type="disulfide bond" evidence="1">
    <location>
        <begin position="742"/>
        <end position="754"/>
    </location>
</feature>
<feature type="disulfide bond" evidence="1">
    <location>
        <begin position="744"/>
        <end position="761"/>
    </location>
</feature>
<feature type="disulfide bond" evidence="1">
    <location>
        <begin position="763"/>
        <end position="772"/>
    </location>
</feature>
<feature type="disulfide bond" evidence="1">
    <location>
        <begin position="775"/>
        <end position="786"/>
    </location>
</feature>
<feature type="disulfide bond" evidence="8">
    <location>
        <begin position="818"/>
        <end position="850"/>
    </location>
</feature>
<feature type="disulfide bond" evidence="8">
    <location>
        <begin position="823"/>
        <end position="843"/>
    </location>
</feature>
<feature type="disulfide bond" evidence="8">
    <location>
        <begin position="832"/>
        <end position="864"/>
    </location>
</feature>
<feature type="disulfide bond" evidence="1">
    <location>
        <begin position="1215"/>
        <end position="1226"/>
    </location>
</feature>
<feature type="disulfide bond" evidence="1">
    <location>
        <begin position="1220"/>
        <end position="1237"/>
    </location>
</feature>
<feature type="disulfide bond" evidence="1">
    <location>
        <begin position="1239"/>
        <end position="1248"/>
    </location>
</feature>
<feature type="disulfide bond" evidence="1">
    <location>
        <begin position="1401"/>
        <end position="1430"/>
    </location>
</feature>
<feature type="disulfide bond" evidence="1">
    <location>
        <begin position="1435"/>
        <end position="1446"/>
    </location>
</feature>
<feature type="disulfide bond" evidence="1">
    <location>
        <begin position="1440"/>
        <end position="1456"/>
    </location>
</feature>
<feature type="disulfide bond" evidence="1">
    <location>
        <begin position="1458"/>
        <end position="1467"/>
    </location>
</feature>
<feature type="disulfide bond" evidence="1">
    <location>
        <begin position="1474"/>
        <end position="1485"/>
    </location>
</feature>
<feature type="disulfide bond" evidence="1">
    <location>
        <begin position="1479"/>
        <end position="1495"/>
    </location>
</feature>
<feature type="disulfide bond" evidence="1">
    <location>
        <begin position="1497"/>
        <end position="1506"/>
    </location>
</feature>
<feature type="disulfide bond" evidence="1">
    <location>
        <begin position="1704"/>
        <end position="1718"/>
    </location>
</feature>
<feature type="disulfide bond" evidence="1">
    <location>
        <begin position="1712"/>
        <end position="1727"/>
    </location>
</feature>
<feature type="disulfide bond" evidence="1">
    <location>
        <begin position="1729"/>
        <end position="1738"/>
    </location>
</feature>
<feature type="disulfide bond" evidence="1">
    <location>
        <begin position="1921"/>
        <end position="1947"/>
    </location>
</feature>
<feature type="splice variant" id="VSP_035995" description="In isoform 3." evidence="20">
    <location>
        <begin position="1"/>
        <end position="61"/>
    </location>
</feature>
<feature type="splice variant" id="VSP_035996" description="In isoform 2 and isoform 3." evidence="20">
    <location>
        <begin position="1634"/>
        <end position="1637"/>
    </location>
</feature>
<feature type="splice variant" id="VSP_035997" description="In isoform 2 and isoform 3." evidence="20">
    <location>
        <begin position="1771"/>
        <end position="1788"/>
    </location>
</feature>
<feature type="sequence variant" description="In a mutant strain; shows symptoms similar to the motor neuron disease, agrin-associated congenital myasthenic syndrome (CMS) with progressive degradation of the neuromuscular junction, decreased acetylcholine receptor (AChR) density and increased subsynaptic reticulum. Synapses eventually denervate and muscles atrophy. There is decreased glycosylation and proteolytic processing is altered due to changes in sensitivity to neurotrypsin." evidence="18">
    <original>F</original>
    <variation>S</variation>
    <location>
        <position position="1061"/>
    </location>
</feature>
<feature type="sequence conflict" description="In Ref. 2; AAI50704." evidence="21" ref="2">
    <original>P</original>
    <variation>T</variation>
    <location>
        <position position="1212"/>
    </location>
</feature>
<feature type="strand" evidence="24">
    <location>
        <begin position="1520"/>
        <end position="1525"/>
    </location>
</feature>
<feature type="strand" evidence="24">
    <location>
        <begin position="1527"/>
        <end position="1530"/>
    </location>
</feature>
<feature type="helix" evidence="24">
    <location>
        <begin position="1533"/>
        <end position="1535"/>
    </location>
</feature>
<feature type="strand" evidence="24">
    <location>
        <begin position="1545"/>
        <end position="1555"/>
    </location>
</feature>
<feature type="strand" evidence="24">
    <location>
        <begin position="1557"/>
        <end position="1564"/>
    </location>
</feature>
<feature type="strand" evidence="24">
    <location>
        <begin position="1572"/>
        <end position="1578"/>
    </location>
</feature>
<feature type="strand" evidence="24">
    <location>
        <begin position="1581"/>
        <end position="1590"/>
    </location>
</feature>
<feature type="strand" evidence="24">
    <location>
        <begin position="1592"/>
        <end position="1596"/>
    </location>
</feature>
<feature type="strand" evidence="24">
    <location>
        <begin position="1605"/>
        <end position="1614"/>
    </location>
</feature>
<feature type="strand" evidence="24">
    <location>
        <begin position="1617"/>
        <end position="1622"/>
    </location>
</feature>
<feature type="strand" evidence="24">
    <location>
        <begin position="1628"/>
        <end position="1631"/>
    </location>
</feature>
<feature type="strand" evidence="24">
    <location>
        <begin position="1649"/>
        <end position="1652"/>
    </location>
</feature>
<feature type="helix" evidence="24">
    <location>
        <begin position="1657"/>
        <end position="1659"/>
    </location>
</feature>
<feature type="helix" evidence="24">
    <location>
        <begin position="1662"/>
        <end position="1664"/>
    </location>
</feature>
<feature type="strand" evidence="24">
    <location>
        <begin position="1671"/>
        <end position="1679"/>
    </location>
</feature>
<feature type="helix" evidence="24">
    <location>
        <begin position="1687"/>
        <end position="1689"/>
    </location>
</feature>
<feature type="strand" evidence="24">
    <location>
        <begin position="1690"/>
        <end position="1695"/>
    </location>
</feature>
<proteinExistence type="evidence at protein level"/>
<sequence>MPPLPLEHRPRQQPGASVLVRYFMIPCNICLILLATSTLGFAVLLFLSNYKPGIHFTAAPSMPPDVCRGMLCGFGAVCEPSVEDPGRASCVCKKNVCPAMVAPVCGSDASTYSNECELQRAQCNQQRRIRLLRQGPCGSRDPCANVTCSFGSTCVPSADGQTASCLCPTTCFGAPDGTVCGSDGVDYPSECQLLRHACANQEHIFKKFDGPCDPCQGSMSDLNHICRVNPRTRHPEMLLRPENCPAQHTPICGDDGVTYENDCVMSRIGAARGLLLQKVRSGQCQTRDQCPETCQFNSVCLSRRGRPHCSCDRVTCDGAYRPVCAQDGHTYDNDCWRQQAECRQQQTIPPKHQGPCDQTPSPCRGAQCAFGATCTVKNGKAVCECQRVCSGGYDPVCGSDGVTYGSVCELESMACTLGREIRVARRGPCDRCGQCRFGSLCEVETGRCVCPSECVESAQPVCGSDGHTYASECELHVHACTHQISLYVASAGHCQTCGETVCTFGAVCSAGQCVCPRCEHPPPGPVCGSDGVTYLSACELREAACQQQVQIEEARAGPCEPAECGSGGSGSGEDNACEQELCRQHGGVWDEDSEDGPCVCDFSCQSVLKSPVCGSDGVTYSTECHLKKARCEARQELYVAAQGACRGPTLAPLLPMASPHCAQTPYGCCQDNVTAAQGVGLAGCPSTCHCNPHGSYSGTCDPVTGQCSCRPGVGGLRCDRCEPGFWNFRGIVTDGHSGCTPCSCDPRGAVRDDCEQMTGLCSCRPGVAGPKCGQCPDGQALGHLGCEADPTTPVTCVEMHCEFGASCVEEAGFAQCVCPTLTCPEANSTKVCGSDGVTYGNECQLKTIACRQRLDISIQSLGPCRESVAPGVSPTSASMTTPRHILSRTLASPHSSLPLSPSTTAHDWPTPLPTSPQTVVGTPRSTAATPSDVASLATAIFRESGSTNGSGDEELSGDEEASGGGSGGLEPPVGSVVVTHGPPIERASCYNSPLGCCSDGKTPSLDSEGSNCPATKAFQGVLELEGVEGQELFYTPEMADPKSELFGETARSIESTLDDLFRNSDVKKDFWSIRLRELGPGKLVRAIVDVHFDPTTAFQAPDVGQALLQQIQVSRPWALAVRRPLREHVRFLDFDWFPTFFTGAATGTTAAVATARATTVSRLSASSVTPRVYPSYTSRPVGRTTAPLTTRRPPTTTASIDRPRTPGPQRPPKSCDSQPCLHGGTCQDLDSGKGFSCSCTAGRAGTVCEKVQLPSVPAFKGHSFLAFPTLRAYHTLRLALEFRALETEGLLLYNGNARGKDFLALALLDGHVQFRFDTGSGPAVLTSLVPVEPGRWHRLELSRHWRQGTLSVDGEAPVVGESPSGTDGLNLDTKLYVGGLPEEQVATVLDRTSVGIGLKGCIRMLDINNQQLELSDWQRAVVQSSGVGECGDHPCSPNPCHGGALCQALEAGVFLCQCPPGRFGPTCADEKNPCQPNPCHGSAPCHVLSRGGAKCACPLGRSGSFCETVLENAGSRPFLADFNGFSYLELKGLHTFERDLGEKMALEMVFLARGPSGLLLYNGQKTDGKGDFVSLALHNRHLEFRYDLGKGAAIIRSKEPIALGTWVRVFLERNGRKGALQVGDGPRVLGESPKSRKVPHTMLNLKEPLYVGGAPDFSKLARGAAVASGFDGAIQLVSLRGHQLLTQEHVLRAVDVAPFAGHPCTQAVDNPCLNGGSCIPREATYECLCPGGFSGLHCEKGIVEKSVGDLETLAFDGRTYIEYLNAVTESELTNEIPAPETLDSRALFSEKALQSNHFELSLRTEATQGLVLWIGKVGERADYMALAIVDGHLQLSYDLGSQPVVLRSTVKVNTNRWLRVRAHREHREGSLQVGNEAPVTGSSPLGATQLDTDGALWLGGLQKLPVGQALPKAYGTGFVGCLRDVVVGHRQLHLLEDAVTKPELRPCPTL</sequence>
<reference key="1">
    <citation type="journal article" date="2009" name="PLoS Biol.">
        <title>Lineage-specific biology revealed by a finished genome assembly of the mouse.</title>
        <authorList>
            <person name="Church D.M."/>
            <person name="Goodstadt L."/>
            <person name="Hillier L.W."/>
            <person name="Zody M.C."/>
            <person name="Goldstein S."/>
            <person name="She X."/>
            <person name="Bult C.J."/>
            <person name="Agarwala R."/>
            <person name="Cherry J.L."/>
            <person name="DiCuccio M."/>
            <person name="Hlavina W."/>
            <person name="Kapustin Y."/>
            <person name="Meric P."/>
            <person name="Maglott D."/>
            <person name="Birtle Z."/>
            <person name="Marques A.C."/>
            <person name="Graves T."/>
            <person name="Zhou S."/>
            <person name="Teague B."/>
            <person name="Potamousis K."/>
            <person name="Churas C."/>
            <person name="Place M."/>
            <person name="Herschleb J."/>
            <person name="Runnheim R."/>
            <person name="Forrest D."/>
            <person name="Amos-Landgraf J."/>
            <person name="Schwartz D.C."/>
            <person name="Cheng Z."/>
            <person name="Lindblad-Toh K."/>
            <person name="Eichler E.E."/>
            <person name="Ponting C.P."/>
        </authorList>
    </citation>
    <scope>NUCLEOTIDE SEQUENCE [LARGE SCALE GENOMIC DNA]</scope>
    <source>
        <strain>C57BL/6J</strain>
    </source>
</reference>
<reference key="2">
    <citation type="journal article" date="2004" name="Genome Res.">
        <title>The status, quality, and expansion of the NIH full-length cDNA project: the Mammalian Gene Collection (MGC).</title>
        <authorList>
            <consortium name="The MGC Project Team"/>
        </authorList>
    </citation>
    <scope>NUCLEOTIDE SEQUENCE [LARGE SCALE MRNA] (ISOFORM 3)</scope>
    <source>
        <tissue>Brain</tissue>
    </source>
</reference>
<reference key="3">
    <citation type="journal article" date="1996" name="Cell">
        <title>Agrin acts via a MuSK receptor complex.</title>
        <authorList>
            <person name="Glass D.J."/>
            <person name="Bowen D.C."/>
            <person name="Stitt T.N."/>
            <person name="Radziejewski C."/>
            <person name="Bruno J."/>
            <person name="Ryan T.E."/>
            <person name="Gies D.R."/>
            <person name="Shah S."/>
            <person name="Mattsson K."/>
            <person name="Burden S.J."/>
            <person name="DiStefano P.S."/>
            <person name="Valenzuela D.M."/>
            <person name="DeChiara T.M."/>
            <person name="Yancopoulos G.D."/>
        </authorList>
    </citation>
    <scope>FUNCTION IN NEUROMUSCULAR JUNCTION DEVELOPMENT</scope>
    <scope>SUBCELLULAR LOCATION</scope>
    <scope>FUNCTION IN PHOSPHORYLATION OF MUSK</scope>
    <scope>INTERACTION WITH LRP4</scope>
</reference>
<reference key="4">
    <citation type="journal article" date="1997" name="J. Biol. Chem.">
        <title>Selective regulation of agrin mRNA induction and alternative splicing in PC12 cells by Ras-dependent actions of nerve growth factor.</title>
        <authorList>
            <person name="Smith M.A."/>
            <person name="Fanger G.R."/>
            <person name="O'Connor L.T."/>
            <person name="Bridle P."/>
            <person name="Maue R.A."/>
        </authorList>
    </citation>
    <scope>REGULATION OF ALTERNATIVE SPLICING</scope>
</reference>
<reference key="5">
    <citation type="journal article" date="1999" name="EMBO J.">
        <title>Interaction of agrin with laminin requires a coiled-coil conformation of the agrin-binding site within the laminin gamma1 chain.</title>
        <authorList>
            <person name="Kammerer R.A."/>
            <person name="Schulthess T."/>
            <person name="Landwehr R."/>
            <person name="Schumacher B."/>
            <person name="Lustig A."/>
            <person name="Yurchenco P.D."/>
            <person name="Ruegg M.A."/>
            <person name="Engel J."/>
            <person name="Denzer A.J."/>
        </authorList>
    </citation>
    <scope>LAMININ BINDING</scope>
</reference>
<reference key="6">
    <citation type="journal article" date="1999" name="Neuron">
        <title>Alternatively spliced isoforms of nerve- and muscle-derived agrin: their roles at the neuromuscular junction.</title>
        <authorList>
            <person name="Burgess R.W."/>
            <person name="Nguyen Q.T."/>
            <person name="Son Y.J."/>
            <person name="Lichtman J.W."/>
            <person name="Sanes J.R."/>
        </authorList>
    </citation>
    <scope>ALTERNATIVE SPLICING</scope>
    <scope>SUBCELLULAR LOCATION</scope>
    <scope>DISRUPTION PHENOTYPE</scope>
    <scope>TISSUE SPECIFICITY</scope>
    <scope>FUNCTION</scope>
</reference>
<reference key="7">
    <citation type="journal article" date="2000" name="J. Cell Biol.">
        <title>Agrin isoforms with distinct amino termini: differential expression, localization, and function.</title>
        <authorList>
            <person name="Burgess R.W."/>
            <person name="Skarnes W.C."/>
            <person name="Sanes J.R."/>
        </authorList>
    </citation>
    <scope>ALTERNATIVE SPLICING</scope>
    <scope>SUBCELLULAR LOCATION</scope>
    <scope>TISSUE SPECIFICITY</scope>
    <scope>FUNCTION</scope>
</reference>
<reference key="8">
    <citation type="journal article" date="2001" name="Mol. Cell. Neurosci.">
        <title>An alternative amino-terminus expressed in the central nervous system converts agrin to a type II transmembrane protein.</title>
        <authorList>
            <person name="Neumann F.R."/>
            <person name="Bittcher G."/>
            <person name="Annies M."/>
            <person name="Schumacher B."/>
            <person name="Kroger S."/>
            <person name="Ruegg M.A."/>
        </authorList>
    </citation>
    <scope>ALTERNATIVE SPLICING</scope>
    <scope>SUBCELLULAR LOCATION</scope>
</reference>
<reference key="9">
    <citation type="journal article" date="2003" name="J. Cell Biol.">
        <title>The COOH-terminal domain of agrin signals via a synaptic receptor in central nervous system neurons.</title>
        <authorList>
            <person name="Hoover C.L."/>
            <person name="Hilgenberg L.G."/>
            <person name="Smith M.A."/>
        </authorList>
    </citation>
    <scope>FUNCTION OF AGRIN C-TERMINAL 22 KDA FRAGMENT</scope>
    <scope>SUBCELLULAR LOCATION</scope>
</reference>
<reference key="10">
    <citation type="journal article" date="2006" name="Mol. Cell. Proteomics">
        <title>Comprehensive identification of phosphorylation sites in postsynaptic density preparations.</title>
        <authorList>
            <person name="Trinidad J.C."/>
            <person name="Specht C.G."/>
            <person name="Thalhammer A."/>
            <person name="Schoepfer R."/>
            <person name="Burlingame A.L."/>
        </authorList>
    </citation>
    <scope>IDENTIFICATION BY MASS SPECTROMETRY [LARGE SCALE ANALYSIS]</scope>
    <source>
        <tissue>Brain</tissue>
    </source>
</reference>
<reference key="11">
    <citation type="journal article" date="2007" name="J. Neurosci.">
        <title>Synapse loss in cortex of agrin-deficient mice after genetic rescue of perinatal death.</title>
        <authorList>
            <person name="Ksiazek I."/>
            <person name="Burkhardt C."/>
            <person name="Lin S."/>
            <person name="Seddik R."/>
            <person name="Maj M."/>
            <person name="Bezakova G."/>
            <person name="Jucker M."/>
            <person name="Arber S."/>
            <person name="Caroni P."/>
            <person name="Sanes J.R."/>
            <person name="Bettler B."/>
            <person name="Ruegg M.A."/>
        </authorList>
    </citation>
    <scope>DISRUPTION PHENOTYPE</scope>
    <scope>TISSUE SPECIFICITY</scope>
    <scope>SUBCELLULAR LOCATION</scope>
    <scope>FUNCTION</scope>
</reference>
<reference key="12">
    <citation type="journal article" date="2008" name="FASEB J.">
        <title>Neurotrypsin cleaves agrin locally at the synapse.</title>
        <authorList>
            <person name="Stephan A."/>
            <person name="Mateos J.M."/>
            <person name="Kozlov S.V."/>
            <person name="Cinelli P."/>
            <person name="Kistler A.D."/>
            <person name="Hettwer S."/>
            <person name="Rulicke T."/>
            <person name="Streit P."/>
            <person name="Kunz B."/>
            <person name="Sonderegger P."/>
        </authorList>
    </citation>
    <scope>PROTEOLYTIC PROCESSING</scope>
    <scope>IDENTIFICATION OF PROTEOLYTICALLY CLEAVED FRAGMENTS BY MASS SPECTROMETRY</scope>
    <scope>SUBCELLULAR LOCATION</scope>
    <scope>TISSUE SPECIFICITY</scope>
</reference>
<reference key="13">
    <citation type="journal article" date="2009" name="Cell">
        <title>Coincident pre- and postsynaptic activation induces dendritic filopodia via neurotrypsin-dependent agrin cleavage.</title>
        <authorList>
            <person name="Matsumoto-Miyai K."/>
            <person name="Sokolowska E."/>
            <person name="Zurlinden A."/>
            <person name="Gee C.E."/>
            <person name="Luscher D."/>
            <person name="Hettwer S."/>
            <person name="Wolfel J."/>
            <person name="Ladner A.P."/>
            <person name="Ster J."/>
            <person name="Gerber U."/>
            <person name="Rulicke T."/>
            <person name="Kunz B."/>
            <person name="Sonderegger P."/>
        </authorList>
    </citation>
    <scope>PROTEOLYTIC PROCESSING</scope>
    <scope>FUNCTION</scope>
</reference>
<reference key="14">
    <citation type="journal article" date="2009" name="Proc. Natl. Acad. Sci. U.S.A.">
        <title>Rescuing Z+ agrin splicing in Nova null mice restores synapse formation and unmasks a physiologic defect in motor neuron firing.</title>
        <authorList>
            <person name="Ruggiu M."/>
            <person name="Herbst R."/>
            <person name="Kim N."/>
            <person name="Jevsek M."/>
            <person name="Fak J.J."/>
            <person name="Mann M.A."/>
            <person name="Fischbach G."/>
            <person name="Burden S.J."/>
            <person name="Darnell R.B."/>
        </authorList>
    </citation>
    <scope>REGULATION OF ALTERNATIVE SPLICING AT THE Z SITE</scope>
</reference>
<reference key="15">
    <citation type="journal article" date="2010" name="Cell">
        <title>A tissue-specific atlas of mouse protein phosphorylation and expression.</title>
        <authorList>
            <person name="Huttlin E.L."/>
            <person name="Jedrychowski M.P."/>
            <person name="Elias J.E."/>
            <person name="Goswami T."/>
            <person name="Rad R."/>
            <person name="Beausoleil S.A."/>
            <person name="Villen J."/>
            <person name="Haas W."/>
            <person name="Sowa M.E."/>
            <person name="Gygi S.P."/>
        </authorList>
    </citation>
    <scope>PHOSPHORYLATION [LARGE SCALE ANALYSIS] AT SER-569 AND SER-571</scope>
    <scope>IDENTIFICATION BY MASS SPECTROMETRY [LARGE SCALE ANALYSIS]</scope>
    <source>
        <tissue>Brain</tissue>
        <tissue>Brown adipose tissue</tissue>
        <tissue>Heart</tissue>
        <tissue>Kidney</tissue>
        <tissue>Liver</tissue>
        <tissue>Lung</tissue>
        <tissue>Pancreas</tissue>
    </source>
</reference>
<reference key="16">
    <citation type="journal article" date="2011" name="FASEB J.">
        <title>Destabilization of the neuromuscular junction by proteolytic cleavage of agrin results in precocious sarcopenia.</title>
        <authorList>
            <person name="Butikofer L."/>
            <person name="Zurlinden A."/>
            <person name="Bolliger M.F."/>
            <person name="Kunz B."/>
            <person name="Sonderegger P."/>
        </authorList>
    </citation>
    <scope>PROTEOLYTIC PROCESSING</scope>
    <scope>FUNCTION</scope>
    <scope>MOUSE MODEL OF PRECOCIOUS SARCOPENIA</scope>
</reference>
<reference key="17">
    <citation type="journal article" date="2011" name="Hum. Mol. Genet.">
        <title>A valid mouse model of AGRIN-associated congenital myasthenic syndrome.</title>
        <authorList>
            <person name="Bogdanik L.P."/>
            <person name="Burgess R.W."/>
        </authorList>
    </citation>
    <scope>VARIANT A MUTANT STRAIN SER-1061</scope>
    <scope>CHARACTERIZATION OF A MOUSE MODEL OF AGRIN-ASSOCIATED CONGENITAL MYASTHENIC SYNDROME</scope>
</reference>
<reference key="18">
    <citation type="journal article" date="2011" name="Protein Eng. Des. Sel.">
        <title>Structural and biophysical characterisation of agrin laminin G3 domain constructs.</title>
        <authorList>
            <person name="Tidow H."/>
            <person name="Mattle D."/>
            <person name="Nissen P."/>
        </authorList>
    </citation>
    <scope>STRUCTURAL CHARACTERISTICS OF LAMININ G3 DOMAIN</scope>
</reference>
<reference key="19">
    <citation type="submission" date="2011-01" db="PDB data bank">
        <title>Crystal structure of the g2 domain of agrin from Mus musculus.</title>
        <authorList>
            <consortium name="New York structural genomix research consortium (NYSGXRC)"/>
        </authorList>
    </citation>
    <scope>X-RAY CRYSTALLOGRAPHY (1.4 ANGSTROMS) OF 1510-1701</scope>
</reference>
<name>AGRIN_MOUSE</name>
<protein>
    <recommendedName>
        <fullName>Agrin</fullName>
    </recommendedName>
    <component>
        <recommendedName>
            <fullName>Agrin N-terminal 110 kDa subunit</fullName>
        </recommendedName>
    </component>
    <component>
        <recommendedName>
            <fullName>Agrin C-terminal 110 kDa subunit</fullName>
        </recommendedName>
    </component>
    <component>
        <recommendedName>
            <fullName>Agrin C-terminal 90 kDa fragment</fullName>
            <shortName>C90</shortName>
        </recommendedName>
    </component>
    <component>
        <recommendedName>
            <fullName>Agrin C-terminal 22 kDa fragment</fullName>
            <shortName>C22</shortName>
        </recommendedName>
    </component>
</protein>
<evidence type="ECO:0000250" key="1"/>
<evidence type="ECO:0000250" key="2">
    <source>
        <dbReference type="UniProtKB" id="P25304"/>
    </source>
</evidence>
<evidence type="ECO:0000255" key="3"/>
<evidence type="ECO:0000255" key="4">
    <source>
        <dbReference type="PROSITE-ProRule" id="PRU00076"/>
    </source>
</evidence>
<evidence type="ECO:0000255" key="5">
    <source>
        <dbReference type="PROSITE-ProRule" id="PRU00122"/>
    </source>
</evidence>
<evidence type="ECO:0000255" key="6">
    <source>
        <dbReference type="PROSITE-ProRule" id="PRU00188"/>
    </source>
</evidence>
<evidence type="ECO:0000255" key="7">
    <source>
        <dbReference type="PROSITE-ProRule" id="PRU00460"/>
    </source>
</evidence>
<evidence type="ECO:0000255" key="8">
    <source>
        <dbReference type="PROSITE-ProRule" id="PRU00798"/>
    </source>
</evidence>
<evidence type="ECO:0000256" key="9">
    <source>
        <dbReference type="SAM" id="MobiDB-lite"/>
    </source>
</evidence>
<evidence type="ECO:0000269" key="10">
    <source>
    </source>
</evidence>
<evidence type="ECO:0000269" key="11">
    <source>
    </source>
</evidence>
<evidence type="ECO:0000269" key="12">
    <source>
    </source>
</evidence>
<evidence type="ECO:0000269" key="13">
    <source>
    </source>
</evidence>
<evidence type="ECO:0000269" key="14">
    <source>
    </source>
</evidence>
<evidence type="ECO:0000269" key="15">
    <source>
    </source>
</evidence>
<evidence type="ECO:0000269" key="16">
    <source>
    </source>
</evidence>
<evidence type="ECO:0000269" key="17">
    <source>
    </source>
</evidence>
<evidence type="ECO:0000269" key="18">
    <source>
    </source>
</evidence>
<evidence type="ECO:0000269" key="19">
    <source>
    </source>
</evidence>
<evidence type="ECO:0000303" key="20">
    <source>
    </source>
</evidence>
<evidence type="ECO:0000305" key="21"/>
<evidence type="ECO:0000305" key="22">
    <source>
    </source>
</evidence>
<evidence type="ECO:0007744" key="23">
    <source>
    </source>
</evidence>
<evidence type="ECO:0007829" key="24">
    <source>
        <dbReference type="PDB" id="3PVE"/>
    </source>
</evidence>
<gene>
    <name type="primary">Agrn</name>
    <name type="synonym">Agrin</name>
</gene>
<keyword id="KW-0002">3D-structure</keyword>
<keyword id="KW-0025">Alternative splicing</keyword>
<keyword id="KW-0106">Calcium</keyword>
<keyword id="KW-1003">Cell membrane</keyword>
<keyword id="KW-0217">Developmental protein</keyword>
<keyword id="KW-0221">Differentiation</keyword>
<keyword id="KW-1015">Disulfide bond</keyword>
<keyword id="KW-0245">EGF-like domain</keyword>
<keyword id="KW-0325">Glycoprotein</keyword>
<keyword id="KW-0357">Heparan sulfate</keyword>
<keyword id="KW-0424">Laminin EGF-like domain</keyword>
<keyword id="KW-0472">Membrane</keyword>
<keyword id="KW-0479">Metal-binding</keyword>
<keyword id="KW-0597">Phosphoprotein</keyword>
<keyword id="KW-0654">Proteoglycan</keyword>
<keyword id="KW-1185">Reference proteome</keyword>
<keyword id="KW-0677">Repeat</keyword>
<keyword id="KW-0735">Signal-anchor</keyword>
<keyword id="KW-0770">Synapse</keyword>
<keyword id="KW-0812">Transmembrane</keyword>
<keyword id="KW-1133">Transmembrane helix</keyword>
<comment type="function">
    <molecule>Isoform 1</molecule>
    <text>Heparan sulfate basal lamina glycoprotein that plays a central role in the formation and the maintenance of the neuromuscular junction (NMJ) and directs key events in postsynaptic differentiation. This neuron-specific (z+) isoform is a component of the AGRN-LRP4 receptor complex that induces the phosphorylation and activation of MUSK. The activation of MUSK in myotubes induces the formation of NMJ by regulating different processes including the transcription of specific genes and the clustering of AChR in the postsynaptic membrane. Calcium ions are required for maximal AChR clustering. AGRN function in neurons is highly regulated by alternative splicing, glycan binding and proteolytic processing. Modulates calcium ion homeostasis in neurons, specifically by inducing an increase in cytoplasmic calcium ions. Functions differentially in the central nervous system (CNS) by inhibiting the alpha(3)-subtype of Na+/K+-ATPase and evoking depolarization at CNS synapses. This transmembrane agrin (TM-agrin) isoform, the predominate form in neurons of the brain, induces dendritic filopodia and synapse formation in mature hippocampal neurons in large part due to the attached glycosaminoglycan chains and the action of Rho-family GTPases.</text>
</comment>
<comment type="function">
    <text>Isoform 2 and isoform 3: these isoforms lacking the 'z' insert (z0) are muscle-specific, have no AChR clustering ability and may be involved in nervous system endothelial cell differentiation.</text>
</comment>
<comment type="function">
    <molecule>Agrin N-terminal 110 kDa subunit</molecule>
    <text evidence="1 10 11 13 14 16 17 19">Involved in regulation of neurite outgrowth probably due to the presence of the glycosaminoglcan (GAG) side chains of heparan and chondroitin sulfate attached to the Ser/Thr- and Gly/Ser-rich regions. Also involved in modulation of growth factor signaling (By similarity).</text>
</comment>
<comment type="function">
    <molecule>Agrin C-terminal 22 kDa fragment</molecule>
    <text>This released fragment is important for agrin signaling and to exert a maximal dendritic filopodia-inducing effect. All 'z' splice variants (z+) of this fragment also show an increase in the number of filopodia.</text>
</comment>
<comment type="subunit">
    <text evidence="1 19">Monomer (By similarity). Interacts (N-terminal subunit) with TGF-beta family members, BMP2 and BMP4; the interactions inhibit the activity of these growth factors. Interacts with TGFB1; the interaction enhances the activity of TGFB1. Interacts with DAG1; the interaction is influenced by cell surface glycosaminoglycans and by alternative splicing of AGRN (By similarity). Component of the AGRN-LRP4 complex that consists of a tetramer of two AGRN-LRP4 heterodimers. Interacts (via the laminin G-like 3 domain) directly with LRP4; the interaction is required for activation of MUSK and clustering of AChR and requires the 'z8' insert present in the z(+8) isoforms.</text>
</comment>
<comment type="subcellular location">
    <subcellularLocation>
        <location evidence="10 13 14 15 19">Synapse</location>
    </subcellularLocation>
    <subcellularLocation>
        <location evidence="11 12">Cell membrane</location>
        <topology evidence="11 12">Single-pass type II membrane protein</topology>
    </subcellularLocation>
</comment>
<comment type="alternative products">
    <event type="alternative splicing"/>
    <isoform>
        <id>A2ASQ1-1</id>
        <name>1</name>
        <name>Transmembrane agrin</name>
        <name>TM-agrin</name>
        <sequence type="displayed"/>
    </isoform>
    <isoform>
        <id>A2ASQ1-2</id>
        <name>2</name>
        <sequence type="described" ref="VSP_035996 VSP_035997"/>
    </isoform>
    <isoform>
        <id>A2ASQ1-3</id>
        <name>3</name>
        <sequence type="described" ref="VSP_035995 VSP_035996 VSP_035997"/>
    </isoform>
    <text>Many isoforms exist depending on the occurrence and length of inserts at the x, y or z splice site. There are 4 'z' isoforms produced with inserts of 0, 8, 11 or 19 AA. Isoforms differ in their acetylcholine receptor clustering activity and tissue specificity. In addition, a secreted isoform is produced by alternative usage of the first exon.</text>
</comment>
<comment type="tissue specificity">
    <text evidence="10 11 14 15">Expressed in central nervous system (CNS) synapses such as in the cerebral cortex and hippocampus. Localizes to basal lamina of hippocampal blood vessels. Both (z+) and (z-) isoforms found in kidney, heart and cerebral vasculature.</text>
</comment>
<comment type="developmental stage">
    <text>All (z+), (z-), (y+) and (y-) isoforms present throughout muscle fiber basal laminae in neonatal animals.</text>
</comment>
<comment type="domain">
    <text evidence="1">Both laminin G-like 2 (G2) and laminin G-like 3 (G3) domains are required for alpha-dystroglycan binding. G3 domain is required for C-terminal heparin, heparan sulfate and sialic acid binding (By similarity).</text>
</comment>
<comment type="PTM">
    <text evidence="1">Contains heparan and chondroitin sulfate chains and alpha-dystroglycan as well as N-linked and O-linked oligosaccharides. Heparin and heparin sulfate binding in the G3 domain is independent of calcium ions. Binds heparin with a stoichiometry of 2:1. Binds sialic acid with a stoichiometry of 1:1 and binding requires calcium ions (By similarity). Glycosaminoglycans (GAGs), present in the N-terminal 110 kDa fragment, are required for induction of filopodia in hippocampal neurons. The first cluster (Gly/Ser-rich) for GAG attachment contains heparan sulfate (HS) chains and the second cluster (Ser/Thr-rich), contains chondroitin sulfate (CS) chains.</text>
</comment>
<comment type="PTM">
    <text evidence="15 16 17">At synaptic junctions, cleaved at two conserved sites, alpha and beta, by neurotrypsin. Cleavage at the alpha-site produces the agrin N-terminal 110-kDa subunit and the agrin C-terminal 110-kDa subunit. Further cleavage of agrin C-terminal 110-kDa subunit at the beta site produces the C-terminal fragments, agrin C-terminal 90 kDa fragment and agrin C-terminal 22 kDa fragment. Excessive cleavage at the beta-site releases large amounts of the agrin C-terminal 22 kDa fragment leading to destabilization at the neuromuscular junction (NMJ). Cleavage is developmentally regulated. In developing brain, neurotrypsin-mediated cleavage occurs mainly during late fetal days and in the first postnatal week.</text>
</comment>
<comment type="disruption phenotype">
    <text evidence="10 14">Z(-)/z(-) mice lacking the 'z' insert are stillborn or die immediately after birth. They did not inflate their lungs and were never seen to move spontaneously. An intramuscular nerve is formed and axons leave the nerve and branch but do not stop and arborize. AChR clusters were fewer in number, about 30% smaller in size and lower in density. Transgenic null (Tg/Agrn -/-) mice, exhibit atrophied muscle due to denervation and are smaller than normal littermates. There is impairment of locomotory behavior and half the mice die after 50 days. There is a greatly reduced number of synapses and about 30% loss of postsynaptic spines and a decrease in the length of dendrites in cortical neurons.</text>
</comment>
<comment type="miscellaneous">
    <text evidence="22">Mice that have excessive neurotrypsin-mediated agrin cleavage, exhibit pathological symptoms characteristic of precocious sarcopenia, with fragmentation and disassembly of the neuromuscular junction (NMJ).</text>
</comment>
<comment type="sequence caution" evidence="21">
    <conflict type="erroneous gene model prediction">
        <sequence resource="EMBL-CDS" id="CAM14888"/>
    </conflict>
</comment>
<accession>A2ASQ1</accession>
<accession>A2ASP9</accession>
<accession>A2ASQ0</accession>
<accession>B2RWU1</accession>